<accession>Q59MA9</accession>
<accession>A0A1D8PDF8</accession>
<sequence>MSSEEKIEETQQQQQESVPVKELLLKVQLPSFFNVGDDYLTIPSSYEENIADLKQALNIIVLCRNLTNYSILIKGIDIIENFGELITFEQIISHFELDKQEEQEEQGQEREISELKIVIKEKSYNLASIYEQISRFREVIGLHYIDRLSNDIGSCGGVSKFNGIQLDDIKPKEAKKEESTEKEQQEKEELSISKEEVSKISDFAKQFISDSFDGNDFTKLTKFDDINGKVKIPIKSLTISQWSPVPPFQQAKGDLLYLSLQTLEHETFNITCHFSGFFVNKSSTINFNPTIKINEKGKFNKSYLLYDLVCQLSPLFSKTIAENEINLSDSTKYPETYLLPGNSFPAYPWLVNEKDLQNVPDLSRSQLSSLINGVDGADYIKDWNNDIQSIKELPTTTVQERIIREKLIQKSLFEFNKTATETAINIIKGNIPPLNPDESSDKFIYLRNGIFYSSGTSTVNGFENTGGEEASRYVASKDLTGIKLINRHDIRGISSLVTCIVDYMGKRVVCQAPVPGILDTPVITSPTTDAEGKNEAEEPESEPVEKVVYGLSSDGSRILEDKSFEEPLKQIGDFFHLKPHKVQLSSSSSGDDVKTESNLVVSKDTKGLKGTDGRKYVIDLYRTTPRDIEFIEQHFKLDDDHQETSYPHGEALIRHEAVNEWWRRKVAVLFKKETEQLEKEGKLLDKNQDQDQENKPQIAIPTDQVVFNPDAFSSDNENEIEQDREEVREISKFIKEKLIEEFLDEIKDQVIPFDGQQLTDVLHRSGINMRYLGYVAERLVVKKEKHLVDLEELIKENEAKAEKKREEEKEKEEKEATESEDKKEKKEDKEDAEKEEAEAEEEVPTKATYQLTLANYSTLHRIIIQEMISRSVKHILRNLTKSLPSYLISTAIAHFHNCLFGGAINPTPKVDFIDEIYKNFCSKSDLESFIKLTHDDVIKLVSKEVFSRFRYKLSSNWINTIQLPQLFREIAFKYGIQWKSQNYPFTKEEFELQNNQNKETPTQIQIIETKSSKKSKKKTQTQVITEKSIQRSSIFIADDIIGFIPIIKDSSYKSTIVEEIYSNARSHLVQGNKEMGMALFNELLAINESIYGKVNPETAKFYNLVAQVYQELGYDIEAALIGRKAVILCERSCGFDSYDTITAYMNSAYYESSNEQYLNSLKLYKEAMNTWSLVYGKDHPTLINTLTNLSESLLKIKAYDSALELLQEALEITKKLNGEISEITGFIYYRIANIVVTLNKFKESKELFDKAYDIFMKLLGPDDSMTKQVAKYVSSVGLYVEYLKRQQQQQQQETQKKSKTKTKAAPVNNIATTSTSTTKNGKKSKKNNTPPQSNPEIANQSIDEILRFIEGKPSGSKKSNKKK</sequence>
<keyword id="KW-0963">Cytoplasm</keyword>
<keyword id="KW-1185">Reference proteome</keyword>
<keyword id="KW-0677">Repeat</keyword>
<keyword id="KW-0802">TPR repeat</keyword>
<name>CLU_CANAL</name>
<protein>
    <recommendedName>
        <fullName evidence="1">Clustered mitochondria protein homolog</fullName>
    </recommendedName>
    <alternativeName>
        <fullName evidence="1">Protein TIF31 homolog</fullName>
    </alternativeName>
</protein>
<comment type="function">
    <text evidence="1">mRNA-binding protein involved in proper cytoplasmic distribution of mitochondria.</text>
</comment>
<comment type="subunit">
    <text evidence="1">May associate with the eukaryotic translation initiation factor 3 (eIF-3) complex.</text>
</comment>
<comment type="subcellular location">
    <subcellularLocation>
        <location evidence="1">Cytoplasm</location>
    </subcellularLocation>
</comment>
<comment type="similarity">
    <text evidence="1">Belongs to the CLU family.</text>
</comment>
<feature type="chain" id="PRO_0000366400" description="Clustered mitochondria protein homolog">
    <location>
        <begin position="1"/>
        <end position="1363"/>
    </location>
</feature>
<feature type="repeat" description="TPR 1" evidence="1">
    <location>
        <begin position="29"/>
        <end position="63"/>
    </location>
</feature>
<feature type="repeat" description="TPR 2" evidence="1">
    <location>
        <begin position="120"/>
        <end position="154"/>
    </location>
</feature>
<feature type="repeat" description="TPR 3" evidence="1">
    <location>
        <begin position="283"/>
        <end position="316"/>
    </location>
</feature>
<feature type="domain" description="Clu" evidence="1">
    <location>
        <begin position="361"/>
        <end position="631"/>
    </location>
</feature>
<feature type="repeat" description="TPR 4" evidence="1">
    <location>
        <begin position="548"/>
        <end position="581"/>
    </location>
</feature>
<feature type="repeat" description="TPR 5" evidence="1">
    <location>
        <begin position="1057"/>
        <end position="1090"/>
    </location>
</feature>
<feature type="repeat" description="TPR 6" evidence="1">
    <location>
        <begin position="1141"/>
        <end position="1174"/>
    </location>
</feature>
<feature type="repeat" description="TPR 7" evidence="1">
    <location>
        <begin position="1183"/>
        <end position="1216"/>
    </location>
</feature>
<feature type="repeat" description="TPR 8" evidence="1">
    <location>
        <begin position="1225"/>
        <end position="1258"/>
    </location>
</feature>
<feature type="region of interest" description="Disordered" evidence="2">
    <location>
        <begin position="172"/>
        <end position="191"/>
    </location>
</feature>
<feature type="region of interest" description="Disordered" evidence="2">
    <location>
        <begin position="521"/>
        <end position="544"/>
    </location>
</feature>
<feature type="region of interest" description="Disordered" evidence="2">
    <location>
        <begin position="799"/>
        <end position="844"/>
    </location>
</feature>
<feature type="region of interest" description="Disordered" evidence="2">
    <location>
        <begin position="1291"/>
        <end position="1363"/>
    </location>
</feature>
<feature type="compositionally biased region" description="Basic and acidic residues" evidence="2">
    <location>
        <begin position="799"/>
        <end position="832"/>
    </location>
</feature>
<feature type="compositionally biased region" description="Acidic residues" evidence="2">
    <location>
        <begin position="833"/>
        <end position="842"/>
    </location>
</feature>
<feature type="compositionally biased region" description="Polar residues" evidence="2">
    <location>
        <begin position="1330"/>
        <end position="1342"/>
    </location>
</feature>
<organism>
    <name type="scientific">Candida albicans (strain SC5314 / ATCC MYA-2876)</name>
    <name type="common">Yeast</name>
    <dbReference type="NCBI Taxonomy" id="237561"/>
    <lineage>
        <taxon>Eukaryota</taxon>
        <taxon>Fungi</taxon>
        <taxon>Dikarya</taxon>
        <taxon>Ascomycota</taxon>
        <taxon>Saccharomycotina</taxon>
        <taxon>Pichiomycetes</taxon>
        <taxon>Debaryomycetaceae</taxon>
        <taxon>Candida/Lodderomyces clade</taxon>
        <taxon>Candida</taxon>
    </lineage>
</organism>
<proteinExistence type="inferred from homology"/>
<gene>
    <name evidence="1" type="primary">CLU1</name>
    <name evidence="1" type="synonym">TIF31</name>
    <name type="ordered locus">CAALFM_C104970WA</name>
    <name type="ORF">CaO19.51</name>
    <name type="ORF">CaO19.7712</name>
</gene>
<evidence type="ECO:0000255" key="1">
    <source>
        <dbReference type="HAMAP-Rule" id="MF_03013"/>
    </source>
</evidence>
<evidence type="ECO:0000256" key="2">
    <source>
        <dbReference type="SAM" id="MobiDB-lite"/>
    </source>
</evidence>
<dbReference type="EMBL" id="CP017623">
    <property type="protein sequence ID" value="AOW26169.1"/>
    <property type="molecule type" value="Genomic_DNA"/>
</dbReference>
<dbReference type="RefSeq" id="XP_710862.2">
    <property type="nucleotide sequence ID" value="XM_705770.2"/>
</dbReference>
<dbReference type="SMR" id="Q59MA9"/>
<dbReference type="BioGRID" id="1230621">
    <property type="interactions" value="1"/>
</dbReference>
<dbReference type="FunCoup" id="Q59MA9">
    <property type="interactions" value="1070"/>
</dbReference>
<dbReference type="STRING" id="237561.Q59MA9"/>
<dbReference type="EnsemblFungi" id="C1_04970W_A-T">
    <property type="protein sequence ID" value="C1_04970W_A-T-p1"/>
    <property type="gene ID" value="C1_04970W_A"/>
</dbReference>
<dbReference type="GeneID" id="3647528"/>
<dbReference type="KEGG" id="cal:CAALFM_C104970WA"/>
<dbReference type="CGD" id="CAL0000196200">
    <property type="gene designation" value="orf19.7712"/>
</dbReference>
<dbReference type="VEuPathDB" id="FungiDB:C1_04970W_A"/>
<dbReference type="eggNOG" id="KOG1839">
    <property type="taxonomic scope" value="Eukaryota"/>
</dbReference>
<dbReference type="HOGENOM" id="CLU_003256_2_0_1"/>
<dbReference type="InParanoid" id="Q59MA9"/>
<dbReference type="OrthoDB" id="1414216at2759"/>
<dbReference type="PRO" id="PR:Q59MA9"/>
<dbReference type="Proteomes" id="UP000000559">
    <property type="component" value="Chromosome 1"/>
</dbReference>
<dbReference type="GO" id="GO:0005737">
    <property type="term" value="C:cytoplasm"/>
    <property type="evidence" value="ECO:0000318"/>
    <property type="project" value="GO_Central"/>
</dbReference>
<dbReference type="GO" id="GO:0003729">
    <property type="term" value="F:mRNA binding"/>
    <property type="evidence" value="ECO:0000318"/>
    <property type="project" value="GO_Central"/>
</dbReference>
<dbReference type="GO" id="GO:0048312">
    <property type="term" value="P:intracellular distribution of mitochondria"/>
    <property type="evidence" value="ECO:0000318"/>
    <property type="project" value="GO_Central"/>
</dbReference>
<dbReference type="GO" id="GO:0007005">
    <property type="term" value="P:mitochondrion organization"/>
    <property type="evidence" value="ECO:0007669"/>
    <property type="project" value="UniProtKB-UniRule"/>
</dbReference>
<dbReference type="CDD" id="cd15466">
    <property type="entry name" value="CLU-central"/>
    <property type="match status" value="1"/>
</dbReference>
<dbReference type="FunFam" id="1.25.40.10:FF:002844">
    <property type="entry name" value="Clustered mitochondria protein homolog"/>
    <property type="match status" value="1"/>
</dbReference>
<dbReference type="Gene3D" id="1.25.40.10">
    <property type="entry name" value="Tetratricopeptide repeat domain"/>
    <property type="match status" value="2"/>
</dbReference>
<dbReference type="HAMAP" id="MF_03013">
    <property type="entry name" value="CLU"/>
    <property type="match status" value="1"/>
</dbReference>
<dbReference type="InterPro" id="IPR033646">
    <property type="entry name" value="CLU-central"/>
</dbReference>
<dbReference type="InterPro" id="IPR025697">
    <property type="entry name" value="CLU_dom"/>
</dbReference>
<dbReference type="InterPro" id="IPR028275">
    <property type="entry name" value="CLU_N"/>
</dbReference>
<dbReference type="InterPro" id="IPR027523">
    <property type="entry name" value="CLU_prot"/>
</dbReference>
<dbReference type="InterPro" id="IPR023231">
    <property type="entry name" value="GSKIP_dom_sf"/>
</dbReference>
<dbReference type="InterPro" id="IPR011990">
    <property type="entry name" value="TPR-like_helical_dom_sf"/>
</dbReference>
<dbReference type="InterPro" id="IPR019734">
    <property type="entry name" value="TPR_rpt"/>
</dbReference>
<dbReference type="PANTHER" id="PTHR12601:SF6">
    <property type="entry name" value="CLUSTERED MITOCHONDRIA PROTEIN HOMOLOG"/>
    <property type="match status" value="1"/>
</dbReference>
<dbReference type="PANTHER" id="PTHR12601">
    <property type="entry name" value="EUKARYOTIC TRANSLATION INITIATION FACTOR 3 SUBUNIT EIF-3"/>
    <property type="match status" value="1"/>
</dbReference>
<dbReference type="Pfam" id="PF13236">
    <property type="entry name" value="CLU"/>
    <property type="match status" value="1"/>
</dbReference>
<dbReference type="Pfam" id="PF15044">
    <property type="entry name" value="CLU_N"/>
    <property type="match status" value="1"/>
</dbReference>
<dbReference type="Pfam" id="PF12807">
    <property type="entry name" value="eIF3_p135"/>
    <property type="match status" value="1"/>
</dbReference>
<dbReference type="Pfam" id="PF13424">
    <property type="entry name" value="TPR_12"/>
    <property type="match status" value="1"/>
</dbReference>
<dbReference type="SMART" id="SM00028">
    <property type="entry name" value="TPR"/>
    <property type="match status" value="3"/>
</dbReference>
<dbReference type="SUPFAM" id="SSF103107">
    <property type="entry name" value="Hypothetical protein c14orf129, hspc210"/>
    <property type="match status" value="1"/>
</dbReference>
<dbReference type="SUPFAM" id="SSF48452">
    <property type="entry name" value="TPR-like"/>
    <property type="match status" value="2"/>
</dbReference>
<dbReference type="PROSITE" id="PS51823">
    <property type="entry name" value="CLU"/>
    <property type="match status" value="1"/>
</dbReference>
<dbReference type="PROSITE" id="PS50293">
    <property type="entry name" value="TPR_REGION"/>
    <property type="match status" value="1"/>
</dbReference>
<reference key="1">
    <citation type="journal article" date="2004" name="Proc. Natl. Acad. Sci. U.S.A.">
        <title>The diploid genome sequence of Candida albicans.</title>
        <authorList>
            <person name="Jones T."/>
            <person name="Federspiel N.A."/>
            <person name="Chibana H."/>
            <person name="Dungan J."/>
            <person name="Kalman S."/>
            <person name="Magee B.B."/>
            <person name="Newport G."/>
            <person name="Thorstenson Y.R."/>
            <person name="Agabian N."/>
            <person name="Magee P.T."/>
            <person name="Davis R.W."/>
            <person name="Scherer S."/>
        </authorList>
    </citation>
    <scope>NUCLEOTIDE SEQUENCE [LARGE SCALE GENOMIC DNA]</scope>
    <source>
        <strain>SC5314 / ATCC MYA-2876</strain>
    </source>
</reference>
<reference key="2">
    <citation type="journal article" date="2007" name="Genome Biol.">
        <title>Assembly of the Candida albicans genome into sixteen supercontigs aligned on the eight chromosomes.</title>
        <authorList>
            <person name="van het Hoog M."/>
            <person name="Rast T.J."/>
            <person name="Martchenko M."/>
            <person name="Grindle S."/>
            <person name="Dignard D."/>
            <person name="Hogues H."/>
            <person name="Cuomo C."/>
            <person name="Berriman M."/>
            <person name="Scherer S."/>
            <person name="Magee B.B."/>
            <person name="Whiteway M."/>
            <person name="Chibana H."/>
            <person name="Nantel A."/>
            <person name="Magee P.T."/>
        </authorList>
    </citation>
    <scope>GENOME REANNOTATION</scope>
    <source>
        <strain>SC5314 / ATCC MYA-2876</strain>
    </source>
</reference>
<reference key="3">
    <citation type="journal article" date="2013" name="Genome Biol.">
        <title>Assembly of a phased diploid Candida albicans genome facilitates allele-specific measurements and provides a simple model for repeat and indel structure.</title>
        <authorList>
            <person name="Muzzey D."/>
            <person name="Schwartz K."/>
            <person name="Weissman J.S."/>
            <person name="Sherlock G."/>
        </authorList>
    </citation>
    <scope>NUCLEOTIDE SEQUENCE [LARGE SCALE GENOMIC DNA]</scope>
    <scope>GENOME REANNOTATION</scope>
    <source>
        <strain>SC5314 / ATCC MYA-2876</strain>
    </source>
</reference>